<protein>
    <recommendedName>
        <fullName evidence="1">Alanine racemase</fullName>
        <ecNumber evidence="1">5.1.1.1</ecNumber>
    </recommendedName>
</protein>
<keyword id="KW-0413">Isomerase</keyword>
<keyword id="KW-0663">Pyridoxal phosphate</keyword>
<dbReference type="EC" id="5.1.1.1" evidence="1"/>
<dbReference type="EMBL" id="CP000444">
    <property type="protein sequence ID" value="ABI41695.1"/>
    <property type="molecule type" value="Genomic_DNA"/>
</dbReference>
<dbReference type="SMR" id="Q0HYW0"/>
<dbReference type="KEGG" id="shm:Shewmr7_0693"/>
<dbReference type="HOGENOM" id="CLU_028393_1_0_6"/>
<dbReference type="UniPathway" id="UPA00042">
    <property type="reaction ID" value="UER00497"/>
</dbReference>
<dbReference type="GO" id="GO:0005829">
    <property type="term" value="C:cytosol"/>
    <property type="evidence" value="ECO:0007669"/>
    <property type="project" value="TreeGrafter"/>
</dbReference>
<dbReference type="GO" id="GO:0008784">
    <property type="term" value="F:alanine racemase activity"/>
    <property type="evidence" value="ECO:0007669"/>
    <property type="project" value="UniProtKB-UniRule"/>
</dbReference>
<dbReference type="GO" id="GO:0030170">
    <property type="term" value="F:pyridoxal phosphate binding"/>
    <property type="evidence" value="ECO:0007669"/>
    <property type="project" value="UniProtKB-UniRule"/>
</dbReference>
<dbReference type="GO" id="GO:0030632">
    <property type="term" value="P:D-alanine biosynthetic process"/>
    <property type="evidence" value="ECO:0007669"/>
    <property type="project" value="UniProtKB-UniRule"/>
</dbReference>
<dbReference type="CDD" id="cd06827">
    <property type="entry name" value="PLPDE_III_AR_proteobact"/>
    <property type="match status" value="1"/>
</dbReference>
<dbReference type="FunFam" id="2.40.37.10:FF:000002">
    <property type="entry name" value="Alanine racemase"/>
    <property type="match status" value="1"/>
</dbReference>
<dbReference type="FunFam" id="3.20.20.10:FF:000002">
    <property type="entry name" value="Alanine racemase"/>
    <property type="match status" value="1"/>
</dbReference>
<dbReference type="Gene3D" id="3.20.20.10">
    <property type="entry name" value="Alanine racemase"/>
    <property type="match status" value="1"/>
</dbReference>
<dbReference type="Gene3D" id="2.40.37.10">
    <property type="entry name" value="Lyase, Ornithine Decarboxylase, Chain A, domain 1"/>
    <property type="match status" value="1"/>
</dbReference>
<dbReference type="HAMAP" id="MF_01201">
    <property type="entry name" value="Ala_racemase"/>
    <property type="match status" value="1"/>
</dbReference>
<dbReference type="InterPro" id="IPR000821">
    <property type="entry name" value="Ala_racemase"/>
</dbReference>
<dbReference type="InterPro" id="IPR009006">
    <property type="entry name" value="Ala_racemase/Decarboxylase_C"/>
</dbReference>
<dbReference type="InterPro" id="IPR011079">
    <property type="entry name" value="Ala_racemase_C"/>
</dbReference>
<dbReference type="InterPro" id="IPR001608">
    <property type="entry name" value="Ala_racemase_N"/>
</dbReference>
<dbReference type="InterPro" id="IPR020622">
    <property type="entry name" value="Ala_racemase_pyridoxalP-BS"/>
</dbReference>
<dbReference type="InterPro" id="IPR029066">
    <property type="entry name" value="PLP-binding_barrel"/>
</dbReference>
<dbReference type="NCBIfam" id="TIGR00492">
    <property type="entry name" value="alr"/>
    <property type="match status" value="1"/>
</dbReference>
<dbReference type="PANTHER" id="PTHR30511">
    <property type="entry name" value="ALANINE RACEMASE"/>
    <property type="match status" value="1"/>
</dbReference>
<dbReference type="PANTHER" id="PTHR30511:SF4">
    <property type="entry name" value="ALANINE RACEMASE, BIOSYNTHETIC"/>
    <property type="match status" value="1"/>
</dbReference>
<dbReference type="Pfam" id="PF00842">
    <property type="entry name" value="Ala_racemase_C"/>
    <property type="match status" value="1"/>
</dbReference>
<dbReference type="Pfam" id="PF01168">
    <property type="entry name" value="Ala_racemase_N"/>
    <property type="match status" value="1"/>
</dbReference>
<dbReference type="PRINTS" id="PR00992">
    <property type="entry name" value="ALARACEMASE"/>
</dbReference>
<dbReference type="SMART" id="SM01005">
    <property type="entry name" value="Ala_racemase_C"/>
    <property type="match status" value="1"/>
</dbReference>
<dbReference type="SUPFAM" id="SSF50621">
    <property type="entry name" value="Alanine racemase C-terminal domain-like"/>
    <property type="match status" value="1"/>
</dbReference>
<dbReference type="SUPFAM" id="SSF51419">
    <property type="entry name" value="PLP-binding barrel"/>
    <property type="match status" value="1"/>
</dbReference>
<dbReference type="PROSITE" id="PS00395">
    <property type="entry name" value="ALANINE_RACEMASE"/>
    <property type="match status" value="1"/>
</dbReference>
<accession>Q0HYW0</accession>
<proteinExistence type="inferred from homology"/>
<feature type="chain" id="PRO_1000164623" description="Alanine racemase">
    <location>
        <begin position="1"/>
        <end position="358"/>
    </location>
</feature>
<feature type="active site" description="Proton acceptor; specific for D-alanine" evidence="1">
    <location>
        <position position="35"/>
    </location>
</feature>
<feature type="active site" description="Proton acceptor; specific for L-alanine" evidence="1">
    <location>
        <position position="255"/>
    </location>
</feature>
<feature type="binding site" evidence="1">
    <location>
        <position position="130"/>
    </location>
    <ligand>
        <name>substrate</name>
    </ligand>
</feature>
<feature type="binding site" evidence="1">
    <location>
        <position position="303"/>
    </location>
    <ligand>
        <name>substrate</name>
    </ligand>
</feature>
<feature type="modified residue" description="N6-(pyridoxal phosphate)lysine" evidence="1">
    <location>
        <position position="35"/>
    </location>
</feature>
<name>ALR_SHESR</name>
<reference key="1">
    <citation type="submission" date="2006-08" db="EMBL/GenBank/DDBJ databases">
        <title>Complete sequence of chromosome 1 of Shewanella sp. MR-7.</title>
        <authorList>
            <person name="Copeland A."/>
            <person name="Lucas S."/>
            <person name="Lapidus A."/>
            <person name="Barry K."/>
            <person name="Detter J.C."/>
            <person name="Glavina del Rio T."/>
            <person name="Hammon N."/>
            <person name="Israni S."/>
            <person name="Dalin E."/>
            <person name="Tice H."/>
            <person name="Pitluck S."/>
            <person name="Kiss H."/>
            <person name="Brettin T."/>
            <person name="Bruce D."/>
            <person name="Han C."/>
            <person name="Tapia R."/>
            <person name="Gilna P."/>
            <person name="Schmutz J."/>
            <person name="Larimer F."/>
            <person name="Land M."/>
            <person name="Hauser L."/>
            <person name="Kyrpides N."/>
            <person name="Mikhailova N."/>
            <person name="Nealson K."/>
            <person name="Konstantinidis K."/>
            <person name="Klappenbach J."/>
            <person name="Tiedje J."/>
            <person name="Richardson P."/>
        </authorList>
    </citation>
    <scope>NUCLEOTIDE SEQUENCE [LARGE SCALE GENOMIC DNA]</scope>
    <source>
        <strain>MR-7</strain>
    </source>
</reference>
<organism>
    <name type="scientific">Shewanella sp. (strain MR-7)</name>
    <dbReference type="NCBI Taxonomy" id="60481"/>
    <lineage>
        <taxon>Bacteria</taxon>
        <taxon>Pseudomonadati</taxon>
        <taxon>Pseudomonadota</taxon>
        <taxon>Gammaproteobacteria</taxon>
        <taxon>Alteromonadales</taxon>
        <taxon>Shewanellaceae</taxon>
        <taxon>Shewanella</taxon>
    </lineage>
</organism>
<sequence>MKPFPRAEISSSALQNNLAVLRQQASRSQVMAVVKANGYGHGLLNVANCLHTADGFGLARLEEALELRAGGVKARLLLLEGFFRSTDLPLLVAHDIDTVVHHESQIEMLEQATLSKPVTVWLKVDSGMHRLGVTPEQFAQVYARLTACDNVAKPIHLMTHFACADEPENNYTQVQMQTFNQLTADLPGFRTLANSAGALYWPKSQGDWIRPGIALYGVSPVTGDCGANHGLIPAMNLVSRLIAVRDHKAGQPVGYGCYWTAKQDTRLGVVAIGYGDGYPRNAPEGTPVWVNGRRVPIVGRVSMDMLTVDLGADAADQVGDEALLWGAALPVEEVAEHIGTIAYELVTKLTPRVAVCLA</sequence>
<evidence type="ECO:0000255" key="1">
    <source>
        <dbReference type="HAMAP-Rule" id="MF_01201"/>
    </source>
</evidence>
<gene>
    <name type="primary">alr</name>
    <name type="ordered locus">Shewmr7_0693</name>
</gene>
<comment type="function">
    <text evidence="1">Catalyzes the interconversion of L-alanine and D-alanine. May also act on other amino acids.</text>
</comment>
<comment type="catalytic activity">
    <reaction evidence="1">
        <text>L-alanine = D-alanine</text>
        <dbReference type="Rhea" id="RHEA:20249"/>
        <dbReference type="ChEBI" id="CHEBI:57416"/>
        <dbReference type="ChEBI" id="CHEBI:57972"/>
        <dbReference type="EC" id="5.1.1.1"/>
    </reaction>
</comment>
<comment type="cofactor">
    <cofactor evidence="1">
        <name>pyridoxal 5'-phosphate</name>
        <dbReference type="ChEBI" id="CHEBI:597326"/>
    </cofactor>
</comment>
<comment type="pathway">
    <text evidence="1">Amino-acid biosynthesis; D-alanine biosynthesis; D-alanine from L-alanine: step 1/1.</text>
</comment>
<comment type="similarity">
    <text evidence="1">Belongs to the alanine racemase family.</text>
</comment>